<accession>Q84MH1</accession>
<accession>Q0DR24</accession>
<comment type="function">
    <text evidence="4">Probable RNA-binding protein that plays an essential role in chloroplast development. Regulates the ribosomal proteins homeostasis and ribosomal RNA development in chloroplasts. Involved the regulation of 16S rRNA and required for the expression of chloroplast-associated photosynthetic genes.</text>
</comment>
<comment type="subcellular location">
    <subcellularLocation>
        <location evidence="4">Plastid</location>
        <location evidence="4">Chloroplast</location>
    </subcellularLocation>
</comment>
<comment type="tissue specificity">
    <text evidence="4">Expressed in roots, leaf sheaths, veins of leaf blade, mature leaves, endodermis of culm, panicles and anthers.</text>
</comment>
<comment type="disruption phenotype">
    <text evidence="4">Leaf albino phenotype, reduced root length, and partial seedling lethality.</text>
</comment>
<comment type="sequence caution" evidence="6">
    <conflict type="erroneous gene model prediction">
        <sequence resource="EMBL-CDS" id="BAF12314"/>
    </conflict>
</comment>
<comment type="sequence caution" evidence="6">
    <conflict type="erroneous gene model prediction">
        <sequence resource="EMBL-CDS" id="BAS84771"/>
    </conflict>
</comment>
<sequence>MEAALLRPPPLAARGGVSIAIAFSVSRLPSAAAAAAAGKPRKLAPPACRCRATPQWQLDFLGAEADTEADGGDDDDDLDLDLSLPAETNDWCVRARRSALRSIEARGLSPSLQRMVASPKKKNKKKKSKKTNLKQKKAAEPKPPRDTDDDEDDEEEADDDLEALLAGGGELDDLELRVAQFADGMFDEKRQRNREQFIQTLSAFSPAAPSNRSQEVSLNRSIVEARTADEVLALTAEVVAAVAKGLSPSPLTPLNIATALHRIAKNMEAVSMLQTHRLGFARSRDMSMLVGLAMVALPECSPQGVSNISWALSKIGGDLLYLPEMDRIAQVAITKVDSFNAQNVANVAGSFASMRHSAPDLISALTRRAAELVYTFKEQELAQFLWGCASLNECPYPLLDALDTACRDAPSFDCHLHDTVPGMWQSSDKEASSLKNSSNAYALNFTRDQIGNIAWSYAVLGQMDRPFFSGIWKTLSQFEERKISDQYREDMMFVSQVYLANQSLKLEYPHLDMCLRGDLEENLTKTGRSKRFNQKMTSSFQKEVGRLLCSTGHEWNKEYTIDGYTVDAVLVDEKLAFEIDGPSHFSRNLGTPLGHTAFKRRYIAAAGWNLVSLSHQEWENLEGEFEQLEYLRRILGFDAE</sequence>
<evidence type="ECO:0000255" key="1"/>
<evidence type="ECO:0000255" key="2">
    <source>
        <dbReference type="PROSITE-ProRule" id="PRU00619"/>
    </source>
</evidence>
<evidence type="ECO:0000256" key="3">
    <source>
        <dbReference type="SAM" id="MobiDB-lite"/>
    </source>
</evidence>
<evidence type="ECO:0000269" key="4">
    <source>
    </source>
</evidence>
<evidence type="ECO:0000303" key="5">
    <source>
    </source>
</evidence>
<evidence type="ECO:0000305" key="6"/>
<evidence type="ECO:0000312" key="7">
    <source>
        <dbReference type="EMBL" id="ABF96703.1"/>
    </source>
</evidence>
<evidence type="ECO:0000312" key="8">
    <source>
        <dbReference type="EMBL" id="BAS84772.1"/>
    </source>
</evidence>
<evidence type="ECO:0000312" key="9">
    <source>
        <dbReference type="EMBL" id="EAZ27387.1"/>
    </source>
</evidence>
<gene>
    <name evidence="5" type="primary">AL1</name>
    <name evidence="8" type="ordered locus">Os03g0425000</name>
    <name evidence="7" type="ordered locus">LOC_Os03g31150</name>
    <name evidence="9" type="ORF">OsJ_11335</name>
</gene>
<organism>
    <name type="scientific">Oryza sativa subsp. japonica</name>
    <name type="common">Rice</name>
    <dbReference type="NCBI Taxonomy" id="39947"/>
    <lineage>
        <taxon>Eukaryota</taxon>
        <taxon>Viridiplantae</taxon>
        <taxon>Streptophyta</taxon>
        <taxon>Embryophyta</taxon>
        <taxon>Tracheophyta</taxon>
        <taxon>Spermatophyta</taxon>
        <taxon>Magnoliopsida</taxon>
        <taxon>Liliopsida</taxon>
        <taxon>Poales</taxon>
        <taxon>Poaceae</taxon>
        <taxon>BOP clade</taxon>
        <taxon>Oryzoideae</taxon>
        <taxon>Oryzeae</taxon>
        <taxon>Oryzinae</taxon>
        <taxon>Oryza</taxon>
        <taxon>Oryza sativa</taxon>
    </lineage>
</organism>
<name>RAP_ORYSJ</name>
<feature type="transit peptide" description="Chloroplast" evidence="1">
    <location>
        <begin position="1"/>
        <end position="32"/>
    </location>
</feature>
<feature type="chain" id="PRO_0000438501" description="RAP domain-containing protein, chloroplastic" evidence="1">
    <location>
        <begin position="33"/>
        <end position="640"/>
    </location>
</feature>
<feature type="domain" description="RAP" evidence="2">
    <location>
        <begin position="575"/>
        <end position="633"/>
    </location>
</feature>
<feature type="region of interest" description="Disordered" evidence="3">
    <location>
        <begin position="111"/>
        <end position="158"/>
    </location>
</feature>
<feature type="compositionally biased region" description="Basic residues" evidence="3">
    <location>
        <begin position="119"/>
        <end position="136"/>
    </location>
</feature>
<feature type="compositionally biased region" description="Basic and acidic residues" evidence="3">
    <location>
        <begin position="137"/>
        <end position="146"/>
    </location>
</feature>
<feature type="compositionally biased region" description="Acidic residues" evidence="3">
    <location>
        <begin position="147"/>
        <end position="158"/>
    </location>
</feature>
<keyword id="KW-0150">Chloroplast</keyword>
<keyword id="KW-0934">Plastid</keyword>
<keyword id="KW-1185">Reference proteome</keyword>
<keyword id="KW-0694">RNA-binding</keyword>
<keyword id="KW-0698">rRNA processing</keyword>
<keyword id="KW-0809">Transit peptide</keyword>
<dbReference type="EMBL" id="AC114983">
    <property type="protein sequence ID" value="AAP20833.1"/>
    <property type="molecule type" value="Genomic_DNA"/>
</dbReference>
<dbReference type="EMBL" id="DP000009">
    <property type="protein sequence ID" value="ABF96703.1"/>
    <property type="molecule type" value="Genomic_DNA"/>
</dbReference>
<dbReference type="EMBL" id="DP000009">
    <property type="protein sequence ID" value="ABF96704.1"/>
    <property type="molecule type" value="Genomic_DNA"/>
</dbReference>
<dbReference type="EMBL" id="DP000009">
    <property type="protein sequence ID" value="ABF96705.1"/>
    <property type="molecule type" value="Genomic_DNA"/>
</dbReference>
<dbReference type="EMBL" id="AP008209">
    <property type="protein sequence ID" value="BAF12314.1"/>
    <property type="status" value="ALT_SEQ"/>
    <property type="molecule type" value="Genomic_DNA"/>
</dbReference>
<dbReference type="EMBL" id="AP014959">
    <property type="protein sequence ID" value="BAS84771.1"/>
    <property type="status" value="ALT_SEQ"/>
    <property type="molecule type" value="Genomic_DNA"/>
</dbReference>
<dbReference type="EMBL" id="AP014959">
    <property type="protein sequence ID" value="BAS84772.1"/>
    <property type="molecule type" value="Genomic_DNA"/>
</dbReference>
<dbReference type="EMBL" id="CM000140">
    <property type="protein sequence ID" value="EAZ27387.1"/>
    <property type="molecule type" value="Genomic_DNA"/>
</dbReference>
<dbReference type="RefSeq" id="NP_001404663.1">
    <property type="nucleotide sequence ID" value="NM_001417734.1"/>
</dbReference>
<dbReference type="RefSeq" id="XP_015628330.1">
    <property type="nucleotide sequence ID" value="XM_015772844.1"/>
</dbReference>
<dbReference type="SMR" id="Q84MH1"/>
<dbReference type="FunCoup" id="Q84MH1">
    <property type="interactions" value="1077"/>
</dbReference>
<dbReference type="STRING" id="39947.Q84MH1"/>
<dbReference type="PaxDb" id="39947-Q84MH1"/>
<dbReference type="EnsemblPlants" id="Os03t0425000-03">
    <property type="protein sequence ID" value="Os03t0425000-03"/>
    <property type="gene ID" value="Os03g0425000"/>
</dbReference>
<dbReference type="GeneID" id="4333151"/>
<dbReference type="Gramene" id="Os03t0425000-03">
    <property type="protein sequence ID" value="Os03t0425000-03"/>
    <property type="gene ID" value="Os03g0425000"/>
</dbReference>
<dbReference type="KEGG" id="dosa:Os03g0425000"/>
<dbReference type="eggNOG" id="ENOG502QUHX">
    <property type="taxonomic scope" value="Eukaryota"/>
</dbReference>
<dbReference type="HOGENOM" id="CLU_028932_0_0_1"/>
<dbReference type="InParanoid" id="Q84MH1"/>
<dbReference type="OMA" id="FSHVWRT"/>
<dbReference type="OrthoDB" id="385235at2759"/>
<dbReference type="Proteomes" id="UP000000763">
    <property type="component" value="Chromosome 3"/>
</dbReference>
<dbReference type="Proteomes" id="UP000007752">
    <property type="component" value="Chromosome 3"/>
</dbReference>
<dbReference type="Proteomes" id="UP000059680">
    <property type="component" value="Chromosome 3"/>
</dbReference>
<dbReference type="ExpressionAtlas" id="Q84MH1">
    <property type="expression patterns" value="baseline and differential"/>
</dbReference>
<dbReference type="GO" id="GO:0009507">
    <property type="term" value="C:chloroplast"/>
    <property type="evidence" value="ECO:0000315"/>
    <property type="project" value="UniProtKB"/>
</dbReference>
<dbReference type="GO" id="GO:0005759">
    <property type="term" value="C:mitochondrial matrix"/>
    <property type="evidence" value="ECO:0000318"/>
    <property type="project" value="GO_Central"/>
</dbReference>
<dbReference type="GO" id="GO:0042646">
    <property type="term" value="C:plastid nucleoid"/>
    <property type="evidence" value="ECO:0007669"/>
    <property type="project" value="EnsemblPlants"/>
</dbReference>
<dbReference type="GO" id="GO:0035770">
    <property type="term" value="C:ribonucleoprotein granule"/>
    <property type="evidence" value="ECO:0000318"/>
    <property type="project" value="GO_Central"/>
</dbReference>
<dbReference type="GO" id="GO:0003723">
    <property type="term" value="F:RNA binding"/>
    <property type="evidence" value="ECO:0000318"/>
    <property type="project" value="GO_Central"/>
</dbReference>
<dbReference type="GO" id="GO:1901259">
    <property type="term" value="P:chloroplast rRNA processing"/>
    <property type="evidence" value="ECO:0000315"/>
    <property type="project" value="UniProtKB"/>
</dbReference>
<dbReference type="GO" id="GO:0000963">
    <property type="term" value="P:mitochondrial RNA processing"/>
    <property type="evidence" value="ECO:0000318"/>
    <property type="project" value="GO_Central"/>
</dbReference>
<dbReference type="GO" id="GO:0044528">
    <property type="term" value="P:regulation of mitochondrial mRNA stability"/>
    <property type="evidence" value="ECO:0000318"/>
    <property type="project" value="GO_Central"/>
</dbReference>
<dbReference type="FunFam" id="3.40.960.10:FF:000003">
    <property type="entry name" value="RAP domain-containing protein, chloroplastic"/>
    <property type="match status" value="1"/>
</dbReference>
<dbReference type="Gene3D" id="3.40.960.10">
    <property type="entry name" value="VSR Endonuclease"/>
    <property type="match status" value="1"/>
</dbReference>
<dbReference type="InterPro" id="IPR050870">
    <property type="entry name" value="FAST_kinase"/>
</dbReference>
<dbReference type="InterPro" id="IPR013584">
    <property type="entry name" value="RAP"/>
</dbReference>
<dbReference type="PANTHER" id="PTHR21228">
    <property type="entry name" value="FAST LEU-RICH DOMAIN-CONTAINING"/>
    <property type="match status" value="1"/>
</dbReference>
<dbReference type="PANTHER" id="PTHR21228:SF40">
    <property type="entry name" value="LD45607P"/>
    <property type="match status" value="1"/>
</dbReference>
<dbReference type="Pfam" id="PF08373">
    <property type="entry name" value="RAP"/>
    <property type="match status" value="1"/>
</dbReference>
<dbReference type="SMART" id="SM00952">
    <property type="entry name" value="RAP"/>
    <property type="match status" value="1"/>
</dbReference>
<dbReference type="PROSITE" id="PS51286">
    <property type="entry name" value="RAP"/>
    <property type="match status" value="1"/>
</dbReference>
<reference key="1">
    <citation type="journal article" date="2005" name="Genome Res.">
        <title>Sequence, annotation, and analysis of synteny between rice chromosome 3 and diverged grass species.</title>
        <authorList>
            <consortium name="The rice chromosome 3 sequencing consortium"/>
            <person name="Buell C.R."/>
            <person name="Yuan Q."/>
            <person name="Ouyang S."/>
            <person name="Liu J."/>
            <person name="Zhu W."/>
            <person name="Wang A."/>
            <person name="Maiti R."/>
            <person name="Haas B."/>
            <person name="Wortman J."/>
            <person name="Pertea M."/>
            <person name="Jones K.M."/>
            <person name="Kim M."/>
            <person name="Overton L."/>
            <person name="Tsitrin T."/>
            <person name="Fadrosh D."/>
            <person name="Bera J."/>
            <person name="Weaver B."/>
            <person name="Jin S."/>
            <person name="Johri S."/>
            <person name="Reardon M."/>
            <person name="Webb K."/>
            <person name="Hill J."/>
            <person name="Moffat K."/>
            <person name="Tallon L."/>
            <person name="Van Aken S."/>
            <person name="Lewis M."/>
            <person name="Utterback T."/>
            <person name="Feldblyum T."/>
            <person name="Zismann V."/>
            <person name="Iobst S."/>
            <person name="Hsiao J."/>
            <person name="de Vazeille A.R."/>
            <person name="Salzberg S.L."/>
            <person name="White O."/>
            <person name="Fraser C.M."/>
            <person name="Yu Y."/>
            <person name="Kim H."/>
            <person name="Rambo T."/>
            <person name="Currie J."/>
            <person name="Collura K."/>
            <person name="Kernodle-Thompson S."/>
            <person name="Wei F."/>
            <person name="Kudrna K."/>
            <person name="Ammiraju J.S.S."/>
            <person name="Luo M."/>
            <person name="Goicoechea J.L."/>
            <person name="Wing R.A."/>
            <person name="Henry D."/>
            <person name="Oates R."/>
            <person name="Palmer M."/>
            <person name="Pries G."/>
            <person name="Saski C."/>
            <person name="Simmons J."/>
            <person name="Soderlund C."/>
            <person name="Nelson W."/>
            <person name="de la Bastide M."/>
            <person name="Spiegel L."/>
            <person name="Nascimento L."/>
            <person name="Huang E."/>
            <person name="Preston R."/>
            <person name="Zutavern T."/>
            <person name="Palmer L."/>
            <person name="O'Shaughnessy A."/>
            <person name="Dike S."/>
            <person name="McCombie W.R."/>
            <person name="Minx P."/>
            <person name="Cordum H."/>
            <person name="Wilson R."/>
            <person name="Jin W."/>
            <person name="Lee H.R."/>
            <person name="Jiang J."/>
            <person name="Jackson S."/>
        </authorList>
    </citation>
    <scope>NUCLEOTIDE SEQUENCE [LARGE SCALE GENOMIC DNA]</scope>
    <source>
        <strain>cv. Nipponbare</strain>
    </source>
</reference>
<reference key="2">
    <citation type="journal article" date="2005" name="Nature">
        <title>The map-based sequence of the rice genome.</title>
        <authorList>
            <consortium name="International rice genome sequencing project (IRGSP)"/>
        </authorList>
    </citation>
    <scope>NUCLEOTIDE SEQUENCE [LARGE SCALE GENOMIC DNA]</scope>
    <source>
        <strain>cv. Nipponbare</strain>
    </source>
</reference>
<reference key="3">
    <citation type="journal article" date="2008" name="Nucleic Acids Res.">
        <title>The rice annotation project database (RAP-DB): 2008 update.</title>
        <authorList>
            <consortium name="The rice annotation project (RAP)"/>
        </authorList>
    </citation>
    <scope>GENOME REANNOTATION</scope>
    <source>
        <strain>cv. Nipponbare</strain>
    </source>
</reference>
<reference key="4">
    <citation type="journal article" date="2013" name="Rice">
        <title>Improvement of the Oryza sativa Nipponbare reference genome using next generation sequence and optical map data.</title>
        <authorList>
            <person name="Kawahara Y."/>
            <person name="de la Bastide M."/>
            <person name="Hamilton J.P."/>
            <person name="Kanamori H."/>
            <person name="McCombie W.R."/>
            <person name="Ouyang S."/>
            <person name="Schwartz D.C."/>
            <person name="Tanaka T."/>
            <person name="Wu J."/>
            <person name="Zhou S."/>
            <person name="Childs K.L."/>
            <person name="Davidson R.M."/>
            <person name="Lin H."/>
            <person name="Quesada-Ocampo L."/>
            <person name="Vaillancourt B."/>
            <person name="Sakai H."/>
            <person name="Lee S.S."/>
            <person name="Kim J."/>
            <person name="Numa H."/>
            <person name="Itoh T."/>
            <person name="Buell C.R."/>
            <person name="Matsumoto T."/>
        </authorList>
    </citation>
    <scope>GENOME REANNOTATION</scope>
    <source>
        <strain>cv. Nipponbare</strain>
    </source>
</reference>
<reference key="5">
    <citation type="journal article" date="2005" name="PLoS Biol.">
        <title>The genomes of Oryza sativa: a history of duplications.</title>
        <authorList>
            <person name="Yu J."/>
            <person name="Wang J."/>
            <person name="Lin W."/>
            <person name="Li S."/>
            <person name="Li H."/>
            <person name="Zhou J."/>
            <person name="Ni P."/>
            <person name="Dong W."/>
            <person name="Hu S."/>
            <person name="Zeng C."/>
            <person name="Zhang J."/>
            <person name="Zhang Y."/>
            <person name="Li R."/>
            <person name="Xu Z."/>
            <person name="Li S."/>
            <person name="Li X."/>
            <person name="Zheng H."/>
            <person name="Cong L."/>
            <person name="Lin L."/>
            <person name="Yin J."/>
            <person name="Geng J."/>
            <person name="Li G."/>
            <person name="Shi J."/>
            <person name="Liu J."/>
            <person name="Lv H."/>
            <person name="Li J."/>
            <person name="Wang J."/>
            <person name="Deng Y."/>
            <person name="Ran L."/>
            <person name="Shi X."/>
            <person name="Wang X."/>
            <person name="Wu Q."/>
            <person name="Li C."/>
            <person name="Ren X."/>
            <person name="Wang J."/>
            <person name="Wang X."/>
            <person name="Li D."/>
            <person name="Liu D."/>
            <person name="Zhang X."/>
            <person name="Ji Z."/>
            <person name="Zhao W."/>
            <person name="Sun Y."/>
            <person name="Zhang Z."/>
            <person name="Bao J."/>
            <person name="Han Y."/>
            <person name="Dong L."/>
            <person name="Ji J."/>
            <person name="Chen P."/>
            <person name="Wu S."/>
            <person name="Liu J."/>
            <person name="Xiao Y."/>
            <person name="Bu D."/>
            <person name="Tan J."/>
            <person name="Yang L."/>
            <person name="Ye C."/>
            <person name="Zhang J."/>
            <person name="Xu J."/>
            <person name="Zhou Y."/>
            <person name="Yu Y."/>
            <person name="Zhang B."/>
            <person name="Zhuang S."/>
            <person name="Wei H."/>
            <person name="Liu B."/>
            <person name="Lei M."/>
            <person name="Yu H."/>
            <person name="Li Y."/>
            <person name="Xu H."/>
            <person name="Wei S."/>
            <person name="He X."/>
            <person name="Fang L."/>
            <person name="Zhang Z."/>
            <person name="Zhang Y."/>
            <person name="Huang X."/>
            <person name="Su Z."/>
            <person name="Tong W."/>
            <person name="Li J."/>
            <person name="Tong Z."/>
            <person name="Li S."/>
            <person name="Ye J."/>
            <person name="Wang L."/>
            <person name="Fang L."/>
            <person name="Lei T."/>
            <person name="Chen C.-S."/>
            <person name="Chen H.-C."/>
            <person name="Xu Z."/>
            <person name="Li H."/>
            <person name="Huang H."/>
            <person name="Zhang F."/>
            <person name="Xu H."/>
            <person name="Li N."/>
            <person name="Zhao C."/>
            <person name="Li S."/>
            <person name="Dong L."/>
            <person name="Huang Y."/>
            <person name="Li L."/>
            <person name="Xi Y."/>
            <person name="Qi Q."/>
            <person name="Li W."/>
            <person name="Zhang B."/>
            <person name="Hu W."/>
            <person name="Zhang Y."/>
            <person name="Tian X."/>
            <person name="Jiao Y."/>
            <person name="Liang X."/>
            <person name="Jin J."/>
            <person name="Gao L."/>
            <person name="Zheng W."/>
            <person name="Hao B."/>
            <person name="Liu S.-M."/>
            <person name="Wang W."/>
            <person name="Yuan L."/>
            <person name="Cao M."/>
            <person name="McDermott J."/>
            <person name="Samudrala R."/>
            <person name="Wang J."/>
            <person name="Wong G.K.-S."/>
            <person name="Yang H."/>
        </authorList>
    </citation>
    <scope>NUCLEOTIDE SEQUENCE [LARGE SCALE GENOMIC DNA]</scope>
    <source>
        <strain>cv. Nipponbare</strain>
    </source>
</reference>
<reference key="6">
    <citation type="journal article" date="2016" name="Plant Physiol.">
        <title>Albino leaf1 that encodes the sole octotricopeptide repeat protein is responsible for chloroplast development.</title>
        <authorList>
            <person name="Zhang Z."/>
            <person name="Tan J."/>
            <person name="Shi Z."/>
            <person name="Xie Q."/>
            <person name="Xing Y."/>
            <person name="Liu C."/>
            <person name="Chen Q."/>
            <person name="Zhu H."/>
            <person name="Wang J."/>
            <person name="Zhang J."/>
            <person name="Zhang G."/>
        </authorList>
    </citation>
    <scope>FUNCTION</scope>
    <scope>SUBCELLULAR LOCATION</scope>
    <scope>TISSUE SPECIFICITY</scope>
    <scope>DISRUPTION PHENOTYPE</scope>
</reference>
<proteinExistence type="evidence at transcript level"/>
<protein>
    <recommendedName>
        <fullName evidence="6">RAP domain-containing protein, chloroplastic</fullName>
    </recommendedName>
    <alternativeName>
        <fullName evidence="5">Protein ALBINO LEAF 1</fullName>
    </alternativeName>
</protein>